<keyword id="KW-0004">4Fe-4S</keyword>
<keyword id="KW-0046">Antibiotic resistance</keyword>
<keyword id="KW-0963">Cytoplasm</keyword>
<keyword id="KW-1015">Disulfide bond</keyword>
<keyword id="KW-0408">Iron</keyword>
<keyword id="KW-0411">Iron-sulfur</keyword>
<keyword id="KW-0479">Metal-binding</keyword>
<keyword id="KW-0489">Methyltransferase</keyword>
<keyword id="KW-0698">rRNA processing</keyword>
<keyword id="KW-0949">S-adenosyl-L-methionine</keyword>
<keyword id="KW-0808">Transferase</keyword>
<keyword id="KW-0819">tRNA processing</keyword>
<evidence type="ECO:0000255" key="1">
    <source>
        <dbReference type="HAMAP-Rule" id="MF_01849"/>
    </source>
</evidence>
<evidence type="ECO:0000255" key="2">
    <source>
        <dbReference type="PROSITE-ProRule" id="PRU01266"/>
    </source>
</evidence>
<evidence type="ECO:0000269" key="3">
    <source>
    </source>
</evidence>
<organism>
    <name type="scientific">Staphylococcus aureus (strain Newman)</name>
    <dbReference type="NCBI Taxonomy" id="426430"/>
    <lineage>
        <taxon>Bacteria</taxon>
        <taxon>Bacillati</taxon>
        <taxon>Bacillota</taxon>
        <taxon>Bacilli</taxon>
        <taxon>Bacillales</taxon>
        <taxon>Staphylococcaceae</taxon>
        <taxon>Staphylococcus</taxon>
    </lineage>
</organism>
<protein>
    <recommendedName>
        <fullName evidence="1">Probable dual-specificity RNA methyltransferase RlmN</fullName>
        <ecNumber evidence="1 3">2.1.1.192</ecNumber>
    </recommendedName>
    <alternativeName>
        <fullName evidence="1">23S rRNA (adenine(2503)-C(2))-methyltransferase</fullName>
    </alternativeName>
    <alternativeName>
        <fullName evidence="1">23S rRNA m2A2503 methyltransferase</fullName>
    </alternativeName>
    <alternativeName>
        <fullName evidence="1">Ribosomal RNA large subunit methyltransferase N</fullName>
    </alternativeName>
    <alternativeName>
        <fullName evidence="1">tRNA (adenine(37)-C(2))-methyltransferase</fullName>
    </alternativeName>
    <alternativeName>
        <fullName evidence="1">tRNA m2A37 methyltransferase</fullName>
    </alternativeName>
</protein>
<comment type="function">
    <text evidence="1 3">Specifically methylates position 2 of adenine 2503 in 23S rRNA. May also catalyze methylation of position 2 of adenine 37 in tRNAs. Confers resistance to some classes of antibiotics such as linezolid.</text>
</comment>
<comment type="catalytic activity">
    <reaction evidence="1 3">
        <text>adenosine(2503) in 23S rRNA + 2 reduced [2Fe-2S]-[ferredoxin] + 2 S-adenosyl-L-methionine = 2-methyladenosine(2503) in 23S rRNA + 5'-deoxyadenosine + L-methionine + 2 oxidized [2Fe-2S]-[ferredoxin] + S-adenosyl-L-homocysteine</text>
        <dbReference type="Rhea" id="RHEA:42916"/>
        <dbReference type="Rhea" id="RHEA-COMP:10000"/>
        <dbReference type="Rhea" id="RHEA-COMP:10001"/>
        <dbReference type="Rhea" id="RHEA-COMP:10152"/>
        <dbReference type="Rhea" id="RHEA-COMP:10282"/>
        <dbReference type="ChEBI" id="CHEBI:17319"/>
        <dbReference type="ChEBI" id="CHEBI:33737"/>
        <dbReference type="ChEBI" id="CHEBI:33738"/>
        <dbReference type="ChEBI" id="CHEBI:57844"/>
        <dbReference type="ChEBI" id="CHEBI:57856"/>
        <dbReference type="ChEBI" id="CHEBI:59789"/>
        <dbReference type="ChEBI" id="CHEBI:74411"/>
        <dbReference type="ChEBI" id="CHEBI:74497"/>
        <dbReference type="EC" id="2.1.1.192"/>
    </reaction>
</comment>
<comment type="catalytic activity">
    <reaction evidence="1 3">
        <text>adenosine(37) in tRNA + 2 reduced [2Fe-2S]-[ferredoxin] + 2 S-adenosyl-L-methionine = 2-methyladenosine(37) in tRNA + 5'-deoxyadenosine + L-methionine + 2 oxidized [2Fe-2S]-[ferredoxin] + S-adenosyl-L-homocysteine</text>
        <dbReference type="Rhea" id="RHEA:43332"/>
        <dbReference type="Rhea" id="RHEA-COMP:10000"/>
        <dbReference type="Rhea" id="RHEA-COMP:10001"/>
        <dbReference type="Rhea" id="RHEA-COMP:10162"/>
        <dbReference type="Rhea" id="RHEA-COMP:10485"/>
        <dbReference type="ChEBI" id="CHEBI:17319"/>
        <dbReference type="ChEBI" id="CHEBI:33737"/>
        <dbReference type="ChEBI" id="CHEBI:33738"/>
        <dbReference type="ChEBI" id="CHEBI:57844"/>
        <dbReference type="ChEBI" id="CHEBI:57856"/>
        <dbReference type="ChEBI" id="CHEBI:59789"/>
        <dbReference type="ChEBI" id="CHEBI:74411"/>
        <dbReference type="ChEBI" id="CHEBI:74497"/>
        <dbReference type="EC" id="2.1.1.192"/>
    </reaction>
</comment>
<comment type="cofactor">
    <cofactor evidence="1">
        <name>[4Fe-4S] cluster</name>
        <dbReference type="ChEBI" id="CHEBI:49883"/>
    </cofactor>
    <text evidence="1">Binds 1 [4Fe-4S] cluster. The cluster is coordinated with 3 cysteines and an exchangeable S-adenosyl-L-methionine.</text>
</comment>
<comment type="subcellular location">
    <subcellularLocation>
        <location evidence="1">Cytoplasm</location>
    </subcellularLocation>
</comment>
<comment type="miscellaneous">
    <text evidence="1">Reaction proceeds by a ping-pong mechanism involving intermediate methylation of a conserved cysteine residue.</text>
</comment>
<comment type="similarity">
    <text evidence="1">Belongs to the radical SAM superfamily. RlmN family.</text>
</comment>
<dbReference type="EC" id="2.1.1.192" evidence="1 3"/>
<dbReference type="EMBL" id="AP009351">
    <property type="protein sequence ID" value="BAF67400.1"/>
    <property type="molecule type" value="Genomic_DNA"/>
</dbReference>
<dbReference type="RefSeq" id="WP_000626897.1">
    <property type="nucleotide sequence ID" value="NZ_JBBIAE010000001.1"/>
</dbReference>
<dbReference type="SMR" id="A6QGB8"/>
<dbReference type="KEGG" id="sae:NWMN_1128"/>
<dbReference type="HOGENOM" id="CLU_029101_0_1_9"/>
<dbReference type="Proteomes" id="UP000006386">
    <property type="component" value="Chromosome"/>
</dbReference>
<dbReference type="GO" id="GO:0005737">
    <property type="term" value="C:cytoplasm"/>
    <property type="evidence" value="ECO:0007669"/>
    <property type="project" value="UniProtKB-SubCell"/>
</dbReference>
<dbReference type="GO" id="GO:0051539">
    <property type="term" value="F:4 iron, 4 sulfur cluster binding"/>
    <property type="evidence" value="ECO:0007669"/>
    <property type="project" value="UniProtKB-UniRule"/>
</dbReference>
<dbReference type="GO" id="GO:0046872">
    <property type="term" value="F:metal ion binding"/>
    <property type="evidence" value="ECO:0007669"/>
    <property type="project" value="UniProtKB-KW"/>
</dbReference>
<dbReference type="GO" id="GO:0070040">
    <property type="term" value="F:rRNA (adenine(2503)-C2-)-methyltransferase activity"/>
    <property type="evidence" value="ECO:0007669"/>
    <property type="project" value="UniProtKB-UniRule"/>
</dbReference>
<dbReference type="GO" id="GO:0019843">
    <property type="term" value="F:rRNA binding"/>
    <property type="evidence" value="ECO:0007669"/>
    <property type="project" value="UniProtKB-UniRule"/>
</dbReference>
<dbReference type="GO" id="GO:0002935">
    <property type="term" value="F:tRNA (adenine(37)-C2)-methyltransferase activity"/>
    <property type="evidence" value="ECO:0007669"/>
    <property type="project" value="UniProtKB-UniRule"/>
</dbReference>
<dbReference type="GO" id="GO:0000049">
    <property type="term" value="F:tRNA binding"/>
    <property type="evidence" value="ECO:0007669"/>
    <property type="project" value="UniProtKB-UniRule"/>
</dbReference>
<dbReference type="GO" id="GO:0046677">
    <property type="term" value="P:response to antibiotic"/>
    <property type="evidence" value="ECO:0007669"/>
    <property type="project" value="UniProtKB-KW"/>
</dbReference>
<dbReference type="GO" id="GO:0070475">
    <property type="term" value="P:rRNA base methylation"/>
    <property type="evidence" value="ECO:0007669"/>
    <property type="project" value="UniProtKB-UniRule"/>
</dbReference>
<dbReference type="GO" id="GO:0030488">
    <property type="term" value="P:tRNA methylation"/>
    <property type="evidence" value="ECO:0007669"/>
    <property type="project" value="UniProtKB-UniRule"/>
</dbReference>
<dbReference type="CDD" id="cd01335">
    <property type="entry name" value="Radical_SAM"/>
    <property type="match status" value="1"/>
</dbReference>
<dbReference type="FunFam" id="1.10.150.530:FF:000002">
    <property type="entry name" value="Probable dual-specificity RNA methyltransferase RlmN"/>
    <property type="match status" value="1"/>
</dbReference>
<dbReference type="FunFam" id="3.20.20.70:FF:000014">
    <property type="entry name" value="Probable dual-specificity RNA methyltransferase RlmN"/>
    <property type="match status" value="1"/>
</dbReference>
<dbReference type="Gene3D" id="1.10.150.530">
    <property type="match status" value="1"/>
</dbReference>
<dbReference type="Gene3D" id="3.20.20.70">
    <property type="entry name" value="Aldolase class I"/>
    <property type="match status" value="1"/>
</dbReference>
<dbReference type="HAMAP" id="MF_01849">
    <property type="entry name" value="RNA_methyltr_RlmN"/>
    <property type="match status" value="1"/>
</dbReference>
<dbReference type="InterPro" id="IPR013785">
    <property type="entry name" value="Aldolase_TIM"/>
</dbReference>
<dbReference type="InterPro" id="IPR040072">
    <property type="entry name" value="Methyltransferase_A"/>
</dbReference>
<dbReference type="InterPro" id="IPR048641">
    <property type="entry name" value="RlmN_N"/>
</dbReference>
<dbReference type="InterPro" id="IPR027492">
    <property type="entry name" value="RNA_MTrfase_RlmN"/>
</dbReference>
<dbReference type="InterPro" id="IPR004383">
    <property type="entry name" value="rRNA_lsu_MTrfase_RlmN/Cfr"/>
</dbReference>
<dbReference type="InterPro" id="IPR007197">
    <property type="entry name" value="rSAM"/>
</dbReference>
<dbReference type="NCBIfam" id="TIGR00048">
    <property type="entry name" value="rRNA_mod_RlmN"/>
    <property type="match status" value="1"/>
</dbReference>
<dbReference type="PANTHER" id="PTHR30544">
    <property type="entry name" value="23S RRNA METHYLTRANSFERASE"/>
    <property type="match status" value="1"/>
</dbReference>
<dbReference type="PANTHER" id="PTHR30544:SF5">
    <property type="entry name" value="RADICAL SAM CORE DOMAIN-CONTAINING PROTEIN"/>
    <property type="match status" value="1"/>
</dbReference>
<dbReference type="Pfam" id="PF04055">
    <property type="entry name" value="Radical_SAM"/>
    <property type="match status" value="1"/>
</dbReference>
<dbReference type="Pfam" id="PF21016">
    <property type="entry name" value="RlmN_N"/>
    <property type="match status" value="1"/>
</dbReference>
<dbReference type="PIRSF" id="PIRSF006004">
    <property type="entry name" value="CHP00048"/>
    <property type="match status" value="1"/>
</dbReference>
<dbReference type="SFLD" id="SFLDF00275">
    <property type="entry name" value="adenosine_C2_methyltransferase"/>
    <property type="match status" value="1"/>
</dbReference>
<dbReference type="SFLD" id="SFLDG01062">
    <property type="entry name" value="methyltransferase_(Class_A)"/>
    <property type="match status" value="1"/>
</dbReference>
<dbReference type="SUPFAM" id="SSF102114">
    <property type="entry name" value="Radical SAM enzymes"/>
    <property type="match status" value="1"/>
</dbReference>
<dbReference type="PROSITE" id="PS51918">
    <property type="entry name" value="RADICAL_SAM"/>
    <property type="match status" value="1"/>
</dbReference>
<name>RLMN_STAAE</name>
<sequence length="364" mass="41905">MITAEKKKKNKFLPNFDKQSIYSLRFDEMQNWLVEQGQQKFRAKQIFEWLYQKRVDSIDEMTNLSKDLRQLLKDNFTVTTLTTVVKQESKDGTIKFLFELQDGYTIETVLMRHDYGNSVCVTTQVGCRIGCTFCASTLGGLKRNLEAGEIVSQVLTVQKALDATEERVSQIVIMGIGEPFENYDEMMDFLRIVNDDNSLNIGARHITVSTSGIIPRIYDFADEDIQINFAVSLHAAKDEVRSRLMPINRAYNVEKLIEAIQYYQEKTNRRVTFEYGLFGGVNDQLEHARELAHLIKGLNCHVNLIPVNHVPERNYVKTAKNDIFKFEKELKRLGINATIRREQGSDIDAACGQLRAKERQVETR</sequence>
<accession>A6QGB8</accession>
<gene>
    <name evidence="1" type="primary">rlmN</name>
    <name type="ordered locus">NWMN_1128</name>
</gene>
<feature type="chain" id="PRO_0000350438" description="Probable dual-specificity RNA methyltransferase RlmN">
    <location>
        <begin position="1"/>
        <end position="364"/>
    </location>
</feature>
<feature type="domain" description="Radical SAM core" evidence="2">
    <location>
        <begin position="113"/>
        <end position="346"/>
    </location>
</feature>
<feature type="active site" description="Proton acceptor" evidence="1">
    <location>
        <position position="107"/>
    </location>
</feature>
<feature type="active site" description="S-methylcysteine intermediate" evidence="1">
    <location>
        <position position="351"/>
    </location>
</feature>
<feature type="binding site" evidence="1">
    <location>
        <position position="127"/>
    </location>
    <ligand>
        <name>[4Fe-4S] cluster</name>
        <dbReference type="ChEBI" id="CHEBI:49883"/>
        <note>4Fe-4S-S-AdoMet</note>
    </ligand>
</feature>
<feature type="binding site" evidence="1">
    <location>
        <position position="131"/>
    </location>
    <ligand>
        <name>[4Fe-4S] cluster</name>
        <dbReference type="ChEBI" id="CHEBI:49883"/>
        <note>4Fe-4S-S-AdoMet</note>
    </ligand>
</feature>
<feature type="binding site" evidence="1">
    <location>
        <position position="134"/>
    </location>
    <ligand>
        <name>[4Fe-4S] cluster</name>
        <dbReference type="ChEBI" id="CHEBI:49883"/>
        <note>4Fe-4S-S-AdoMet</note>
    </ligand>
</feature>
<feature type="binding site" evidence="1">
    <location>
        <begin position="177"/>
        <end position="178"/>
    </location>
    <ligand>
        <name>S-adenosyl-L-methionine</name>
        <dbReference type="ChEBI" id="CHEBI:59789"/>
    </ligand>
</feature>
<feature type="binding site" evidence="1">
    <location>
        <position position="209"/>
    </location>
    <ligand>
        <name>S-adenosyl-L-methionine</name>
        <dbReference type="ChEBI" id="CHEBI:59789"/>
    </ligand>
</feature>
<feature type="binding site" evidence="1">
    <location>
        <begin position="232"/>
        <end position="234"/>
    </location>
    <ligand>
        <name>S-adenosyl-L-methionine</name>
        <dbReference type="ChEBI" id="CHEBI:59789"/>
    </ligand>
</feature>
<feature type="binding site" evidence="1">
    <location>
        <position position="308"/>
    </location>
    <ligand>
        <name>S-adenosyl-L-methionine</name>
        <dbReference type="ChEBI" id="CHEBI:59789"/>
    </ligand>
</feature>
<feature type="disulfide bond" description="(transient)" evidence="1">
    <location>
        <begin position="120"/>
        <end position="351"/>
    </location>
</feature>
<reference key="1">
    <citation type="journal article" date="2008" name="J. Bacteriol.">
        <title>Genome sequence of Staphylococcus aureus strain Newman and comparative analysis of staphylococcal genomes: polymorphism and evolution of two major pathogenicity islands.</title>
        <authorList>
            <person name="Baba T."/>
            <person name="Bae T."/>
            <person name="Schneewind O."/>
            <person name="Takeuchi F."/>
            <person name="Hiramatsu K."/>
        </authorList>
    </citation>
    <scope>NUCLEOTIDE SEQUENCE [LARGE SCALE GENOMIC DNA]</scope>
    <source>
        <strain>Newman</strain>
    </source>
</reference>
<reference key="2">
    <citation type="journal article" date="2008" name="RNA">
        <title>The methyltransferase YfgB/RlmN is responsible for modification of adenosine 2503 in 23S rRNA.</title>
        <authorList>
            <person name="Toh S.-M."/>
            <person name="Xiong L."/>
            <person name="Bae T."/>
            <person name="Mankin A.S."/>
        </authorList>
    </citation>
    <scope>FUNCTION AS A 23S RRNA METHYLTRANSFERASE</scope>
    <scope>CATALYTIC ACTIVITY</scope>
    <scope>ANTIBIOTIC RESISTANCE</scope>
</reference>
<proteinExistence type="evidence at protein level"/>